<evidence type="ECO:0000250" key="1">
    <source>
        <dbReference type="UniProtKB" id="Q86V48"/>
    </source>
</evidence>
<evidence type="ECO:0000250" key="2">
    <source>
        <dbReference type="UniProtKB" id="Q9ESV1"/>
    </source>
</evidence>
<evidence type="ECO:0000255" key="3"/>
<evidence type="ECO:0000256" key="4">
    <source>
        <dbReference type="SAM" id="MobiDB-lite"/>
    </source>
</evidence>
<evidence type="ECO:0000269" key="5">
    <source>
    </source>
</evidence>
<evidence type="ECO:0000269" key="6">
    <source>
    </source>
</evidence>
<evidence type="ECO:0000269" key="7">
    <source>
    </source>
</evidence>
<evidence type="ECO:0000269" key="8">
    <source>
    </source>
</evidence>
<evidence type="ECO:0000269" key="9">
    <source>
    </source>
</evidence>
<evidence type="ECO:0000269" key="10">
    <source>
    </source>
</evidence>
<evidence type="ECO:0000305" key="11"/>
<evidence type="ECO:0007744" key="12">
    <source>
    </source>
</evidence>
<evidence type="ECO:0007744" key="13">
    <source>
    </source>
</evidence>
<evidence type="ECO:0007744" key="14">
    <source>
    </source>
</evidence>
<evidence type="ECO:0007744" key="15">
    <source>
    </source>
</evidence>
<evidence type="ECO:0007744" key="16">
    <source>
    </source>
</evidence>
<reference key="1">
    <citation type="journal article" date="1996" name="Genomics">
        <title>Identification, molecular characterization, and chromosomal localization of the cDNA encoding a novel leucine zipper motif-containing protein.</title>
        <authorList>
            <person name="Sun D.-S."/>
            <person name="Chang A.C."/>
            <person name="Jenkins N.A."/>
            <person name="Gilbert D.J."/>
            <person name="Copeland N.G."/>
            <person name="Chang N.-C.A."/>
        </authorList>
    </citation>
    <scope>NUCLEOTIDE SEQUENCE [MRNA]</scope>
    <scope>TISSUE SPECIFICITY</scope>
    <source>
        <strain>129/SvJ</strain>
    </source>
</reference>
<reference key="2">
    <citation type="journal article" date="2001" name="J. Biomed. Sci.">
        <title>Restricted expression of LUZP in neural lineage cells: a study in embryonic stem cells.</title>
        <authorList>
            <person name="Lee M.W.-Y."/>
            <person name="Chang A.C."/>
            <person name="Sun D.-S."/>
            <person name="Hsu C.-Y."/>
            <person name="Chang N.-C.A."/>
        </authorList>
    </citation>
    <scope>NUCLEOTIDE SEQUENCE [GENOMIC DNA]</scope>
    <source>
        <strain>129/SvJ</strain>
        <tissue>Peritoneal exudate</tissue>
    </source>
</reference>
<reference key="3">
    <citation type="journal article" date="2009" name="PLoS Biol.">
        <title>Lineage-specific biology revealed by a finished genome assembly of the mouse.</title>
        <authorList>
            <person name="Church D.M."/>
            <person name="Goodstadt L."/>
            <person name="Hillier L.W."/>
            <person name="Zody M.C."/>
            <person name="Goldstein S."/>
            <person name="She X."/>
            <person name="Bult C.J."/>
            <person name="Agarwala R."/>
            <person name="Cherry J.L."/>
            <person name="DiCuccio M."/>
            <person name="Hlavina W."/>
            <person name="Kapustin Y."/>
            <person name="Meric P."/>
            <person name="Maglott D."/>
            <person name="Birtle Z."/>
            <person name="Marques A.C."/>
            <person name="Graves T."/>
            <person name="Zhou S."/>
            <person name="Teague B."/>
            <person name="Potamousis K."/>
            <person name="Churas C."/>
            <person name="Place M."/>
            <person name="Herschleb J."/>
            <person name="Runnheim R."/>
            <person name="Forrest D."/>
            <person name="Amos-Landgraf J."/>
            <person name="Schwartz D.C."/>
            <person name="Cheng Z."/>
            <person name="Lindblad-Toh K."/>
            <person name="Eichler E.E."/>
            <person name="Ponting C.P."/>
        </authorList>
    </citation>
    <scope>NUCLEOTIDE SEQUENCE [LARGE SCALE GENOMIC DNA]</scope>
    <source>
        <strain>C57BL/6J</strain>
    </source>
</reference>
<reference key="4">
    <citation type="journal article" date="2005" name="Science">
        <title>The transcriptional landscape of the mammalian genome.</title>
        <authorList>
            <person name="Carninci P."/>
            <person name="Kasukawa T."/>
            <person name="Katayama S."/>
            <person name="Gough J."/>
            <person name="Frith M.C."/>
            <person name="Maeda N."/>
            <person name="Oyama R."/>
            <person name="Ravasi T."/>
            <person name="Lenhard B."/>
            <person name="Wells C."/>
            <person name="Kodzius R."/>
            <person name="Shimokawa K."/>
            <person name="Bajic V.B."/>
            <person name="Brenner S.E."/>
            <person name="Batalov S."/>
            <person name="Forrest A.R."/>
            <person name="Zavolan M."/>
            <person name="Davis M.J."/>
            <person name="Wilming L.G."/>
            <person name="Aidinis V."/>
            <person name="Allen J.E."/>
            <person name="Ambesi-Impiombato A."/>
            <person name="Apweiler R."/>
            <person name="Aturaliya R.N."/>
            <person name="Bailey T.L."/>
            <person name="Bansal M."/>
            <person name="Baxter L."/>
            <person name="Beisel K.W."/>
            <person name="Bersano T."/>
            <person name="Bono H."/>
            <person name="Chalk A.M."/>
            <person name="Chiu K.P."/>
            <person name="Choudhary V."/>
            <person name="Christoffels A."/>
            <person name="Clutterbuck D.R."/>
            <person name="Crowe M.L."/>
            <person name="Dalla E."/>
            <person name="Dalrymple B.P."/>
            <person name="de Bono B."/>
            <person name="Della Gatta G."/>
            <person name="di Bernardo D."/>
            <person name="Down T."/>
            <person name="Engstrom P."/>
            <person name="Fagiolini M."/>
            <person name="Faulkner G."/>
            <person name="Fletcher C.F."/>
            <person name="Fukushima T."/>
            <person name="Furuno M."/>
            <person name="Futaki S."/>
            <person name="Gariboldi M."/>
            <person name="Georgii-Hemming P."/>
            <person name="Gingeras T.R."/>
            <person name="Gojobori T."/>
            <person name="Green R.E."/>
            <person name="Gustincich S."/>
            <person name="Harbers M."/>
            <person name="Hayashi Y."/>
            <person name="Hensch T.K."/>
            <person name="Hirokawa N."/>
            <person name="Hill D."/>
            <person name="Huminiecki L."/>
            <person name="Iacono M."/>
            <person name="Ikeo K."/>
            <person name="Iwama A."/>
            <person name="Ishikawa T."/>
            <person name="Jakt M."/>
            <person name="Kanapin A."/>
            <person name="Katoh M."/>
            <person name="Kawasawa Y."/>
            <person name="Kelso J."/>
            <person name="Kitamura H."/>
            <person name="Kitano H."/>
            <person name="Kollias G."/>
            <person name="Krishnan S.P."/>
            <person name="Kruger A."/>
            <person name="Kummerfeld S.K."/>
            <person name="Kurochkin I.V."/>
            <person name="Lareau L.F."/>
            <person name="Lazarevic D."/>
            <person name="Lipovich L."/>
            <person name="Liu J."/>
            <person name="Liuni S."/>
            <person name="McWilliam S."/>
            <person name="Madan Babu M."/>
            <person name="Madera M."/>
            <person name="Marchionni L."/>
            <person name="Matsuda H."/>
            <person name="Matsuzawa S."/>
            <person name="Miki H."/>
            <person name="Mignone F."/>
            <person name="Miyake S."/>
            <person name="Morris K."/>
            <person name="Mottagui-Tabar S."/>
            <person name="Mulder N."/>
            <person name="Nakano N."/>
            <person name="Nakauchi H."/>
            <person name="Ng P."/>
            <person name="Nilsson R."/>
            <person name="Nishiguchi S."/>
            <person name="Nishikawa S."/>
            <person name="Nori F."/>
            <person name="Ohara O."/>
            <person name="Okazaki Y."/>
            <person name="Orlando V."/>
            <person name="Pang K.C."/>
            <person name="Pavan W.J."/>
            <person name="Pavesi G."/>
            <person name="Pesole G."/>
            <person name="Petrovsky N."/>
            <person name="Piazza S."/>
            <person name="Reed J."/>
            <person name="Reid J.F."/>
            <person name="Ring B.Z."/>
            <person name="Ringwald M."/>
            <person name="Rost B."/>
            <person name="Ruan Y."/>
            <person name="Salzberg S.L."/>
            <person name="Sandelin A."/>
            <person name="Schneider C."/>
            <person name="Schoenbach C."/>
            <person name="Sekiguchi K."/>
            <person name="Semple C.A."/>
            <person name="Seno S."/>
            <person name="Sessa L."/>
            <person name="Sheng Y."/>
            <person name="Shibata Y."/>
            <person name="Shimada H."/>
            <person name="Shimada K."/>
            <person name="Silva D."/>
            <person name="Sinclair B."/>
            <person name="Sperling S."/>
            <person name="Stupka E."/>
            <person name="Sugiura K."/>
            <person name="Sultana R."/>
            <person name="Takenaka Y."/>
            <person name="Taki K."/>
            <person name="Tammoja K."/>
            <person name="Tan S.L."/>
            <person name="Tang S."/>
            <person name="Taylor M.S."/>
            <person name="Tegner J."/>
            <person name="Teichmann S.A."/>
            <person name="Ueda H.R."/>
            <person name="van Nimwegen E."/>
            <person name="Verardo R."/>
            <person name="Wei C.L."/>
            <person name="Yagi K."/>
            <person name="Yamanishi H."/>
            <person name="Zabarovsky E."/>
            <person name="Zhu S."/>
            <person name="Zimmer A."/>
            <person name="Hide W."/>
            <person name="Bult C."/>
            <person name="Grimmond S.M."/>
            <person name="Teasdale R.D."/>
            <person name="Liu E.T."/>
            <person name="Brusic V."/>
            <person name="Quackenbush J."/>
            <person name="Wahlestedt C."/>
            <person name="Mattick J.S."/>
            <person name="Hume D.A."/>
            <person name="Kai C."/>
            <person name="Sasaki D."/>
            <person name="Tomaru Y."/>
            <person name="Fukuda S."/>
            <person name="Kanamori-Katayama M."/>
            <person name="Suzuki M."/>
            <person name="Aoki J."/>
            <person name="Arakawa T."/>
            <person name="Iida J."/>
            <person name="Imamura K."/>
            <person name="Itoh M."/>
            <person name="Kato T."/>
            <person name="Kawaji H."/>
            <person name="Kawagashira N."/>
            <person name="Kawashima T."/>
            <person name="Kojima M."/>
            <person name="Kondo S."/>
            <person name="Konno H."/>
            <person name="Nakano K."/>
            <person name="Ninomiya N."/>
            <person name="Nishio T."/>
            <person name="Okada M."/>
            <person name="Plessy C."/>
            <person name="Shibata K."/>
            <person name="Shiraki T."/>
            <person name="Suzuki S."/>
            <person name="Tagami M."/>
            <person name="Waki K."/>
            <person name="Watahiki A."/>
            <person name="Okamura-Oho Y."/>
            <person name="Suzuki H."/>
            <person name="Kawai J."/>
            <person name="Hayashizaki Y."/>
        </authorList>
    </citation>
    <scope>NUCLEOTIDE SEQUENCE [LARGE SCALE MRNA] OF 1-318 AND 661-1068</scope>
    <source>
        <strain>C57BL/6J</strain>
        <tissue>Corpora quadrigemina</tissue>
        <tissue>Embryo</tissue>
        <tissue>Vagina</tissue>
    </source>
</reference>
<reference key="5">
    <citation type="journal article" date="2004" name="Genome Res.">
        <title>The status, quality, and expansion of the NIH full-length cDNA project: the Mammalian Gene Collection (MGC).</title>
        <authorList>
            <consortium name="The MGC Project Team"/>
        </authorList>
    </citation>
    <scope>NUCLEOTIDE SEQUENCE [LARGE SCALE MRNA] OF 522-1068</scope>
    <source>
        <tissue>Limb</tissue>
    </source>
</reference>
<reference key="6">
    <citation type="journal article" date="2006" name="Mol. Cell. Proteomics">
        <title>Comprehensive identification of phosphorylation sites in postsynaptic density preparations.</title>
        <authorList>
            <person name="Trinidad J.C."/>
            <person name="Specht C.G."/>
            <person name="Thalhammer A."/>
            <person name="Schoepfer R."/>
            <person name="Burlingame A.L."/>
        </authorList>
    </citation>
    <scope>PHOSPHORYLATION [LARGE SCALE ANALYSIS] AT SER-261 AND SER-660</scope>
    <scope>IDENTIFICATION BY MASS SPECTROMETRY [LARGE SCALE ANALYSIS]</scope>
    <source>
        <tissue>Brain</tissue>
    </source>
</reference>
<reference key="7">
    <citation type="journal article" date="2007" name="Proc. Natl. Acad. Sci. U.S.A.">
        <title>Large-scale phosphorylation analysis of mouse liver.</title>
        <authorList>
            <person name="Villen J."/>
            <person name="Beausoleil S.A."/>
            <person name="Gerber S.A."/>
            <person name="Gygi S.P."/>
        </authorList>
    </citation>
    <scope>PHOSPHORYLATION [LARGE SCALE ANALYSIS] AT SER-612 AND SER-660</scope>
    <scope>IDENTIFICATION BY MASS SPECTROMETRY [LARGE SCALE ANALYSIS]</scope>
    <source>
        <tissue>Liver</tissue>
    </source>
</reference>
<reference key="8">
    <citation type="journal article" date="2008" name="Biochem. Biophys. Res. Commun.">
        <title>LUZP deficiency affects neural tube closure during brain development.</title>
        <authorList>
            <person name="Hsu C.Y."/>
            <person name="Chang N.C."/>
            <person name="Lee M.W."/>
            <person name="Lee K.H."/>
            <person name="Sun D.S."/>
            <person name="Lai C."/>
            <person name="Chang A.C."/>
        </authorList>
    </citation>
    <scope>FUNCTION</scope>
    <scope>DISRUPTION PHENOTYPE</scope>
</reference>
<reference key="9">
    <citation type="journal article" date="2009" name="Immunity">
        <title>The phagosomal proteome in interferon-gamma-activated macrophages.</title>
        <authorList>
            <person name="Trost M."/>
            <person name="English L."/>
            <person name="Lemieux S."/>
            <person name="Courcelles M."/>
            <person name="Desjardins M."/>
            <person name="Thibault P."/>
        </authorList>
    </citation>
    <scope>PHOSPHORYLATION [LARGE SCALE ANALYSIS] AT SER-660</scope>
    <scope>IDENTIFICATION BY MASS SPECTROMETRY [LARGE SCALE ANALYSIS]</scope>
</reference>
<reference key="10">
    <citation type="journal article" date="2009" name="Mol. Cell. Proteomics">
        <title>Large scale localization of protein phosphorylation by use of electron capture dissociation mass spectrometry.</title>
        <authorList>
            <person name="Sweet S.M."/>
            <person name="Bailey C.M."/>
            <person name="Cunningham D.L."/>
            <person name="Heath J.K."/>
            <person name="Cooper H.J."/>
        </authorList>
    </citation>
    <scope>PHOSPHORYLATION [LARGE SCALE ANALYSIS] AT SER-660</scope>
    <scope>IDENTIFICATION BY MASS SPECTROMETRY [LARGE SCALE ANALYSIS]</scope>
    <source>
        <tissue>Embryonic fibroblast</tissue>
    </source>
</reference>
<reference key="11">
    <citation type="journal article" date="2010" name="Cell">
        <title>A tissue-specific atlas of mouse protein phosphorylation and expression.</title>
        <authorList>
            <person name="Huttlin E.L."/>
            <person name="Jedrychowski M.P."/>
            <person name="Elias J.E."/>
            <person name="Goswami T."/>
            <person name="Rad R."/>
            <person name="Beausoleil S.A."/>
            <person name="Villen J."/>
            <person name="Haas W."/>
            <person name="Sowa M.E."/>
            <person name="Gygi S.P."/>
        </authorList>
    </citation>
    <scope>PHOSPHORYLATION [LARGE SCALE ANALYSIS] AT SER-261; SER-612 AND SER-660</scope>
    <scope>IDENTIFICATION BY MASS SPECTROMETRY [LARGE SCALE ANALYSIS]</scope>
    <source>
        <tissue>Brain</tissue>
        <tissue>Brown adipose tissue</tissue>
        <tissue>Heart</tissue>
        <tissue>Kidney</tissue>
        <tissue>Liver</tissue>
        <tissue>Lung</tissue>
        <tissue>Pancreas</tissue>
        <tissue>Spleen</tissue>
        <tissue>Testis</tissue>
    </source>
</reference>
<reference key="12">
    <citation type="journal article" date="2020" name="Elife">
        <title>LUZP1, a novel regulator of primary cilia and the actin cytoskeleton, is a contributing factor in Townes-Brocks Syndrome.</title>
        <authorList>
            <person name="Bozal-Basterra L."/>
            <person name="Gonzalez-Santamarta M."/>
            <person name="Muratore V."/>
            <person name="Bermejo-Arteagabeitia A."/>
            <person name="Da Fonseca C."/>
            <person name="Barroso-Gomila O."/>
            <person name="Azkargorta M."/>
            <person name="Iloro I."/>
            <person name="Pampliega O."/>
            <person name="Andrade R."/>
            <person name="Martin-Martin N."/>
            <person name="Branon T.C."/>
            <person name="Ting A.Y."/>
            <person name="Rodriguez J.A."/>
            <person name="Carracedo A."/>
            <person name="Elortza F."/>
            <person name="Sutherland J.D."/>
            <person name="Barrio R."/>
        </authorList>
    </citation>
    <scope>FUNCTION</scope>
</reference>
<reference key="13">
    <citation type="journal article" date="2021" name="Biochem. Cell Biol.">
        <title>Chromatin remodeling factor CECR2 forms tissue-specific complexes with CCAR2 and LUZP1.</title>
        <authorList>
            <person name="Niri F."/>
            <person name="Terpstra A.N."/>
            <person name="Lim K.R.Q."/>
            <person name="McDermid H.E."/>
        </authorList>
    </citation>
    <scope>FUNCTION</scope>
    <scope>IDENTIFICATION IN THE CERF-1 AND CERF-5 COMPLEXES</scope>
</reference>
<reference key="14">
    <citation type="journal article" date="2021" name="EMBO J.">
        <title>A microtubule-LUZP1 association around tight junction promotes epithelial cell apical constriction.</title>
        <authorList>
            <person name="Yano T."/>
            <person name="Tsukita K."/>
            <person name="Kanoh H."/>
            <person name="Nakayama S."/>
            <person name="Kashihara H."/>
            <person name="Mizuno T."/>
            <person name="Tanaka H."/>
            <person name="Matsui T."/>
            <person name="Goto Y."/>
            <person name="Komatsubara A."/>
            <person name="Aoki K."/>
            <person name="Takahashi R."/>
            <person name="Tamura A."/>
            <person name="Tsukita S."/>
        </authorList>
    </citation>
    <scope>FUNCTION</scope>
    <scope>SUBCELLULAR LOCATION</scope>
</reference>
<reference key="15">
    <citation type="journal article" date="2021" name="Front. Cell Dev. Biol.">
        <title>LUZP1 Controls Cell Division, Migration and Invasion Through Regulation of the Actin Cytoskeleton.</title>
        <authorList>
            <person name="Bozal-Basterra L."/>
            <person name="Gonzalez-Santamarta M."/>
            <person name="Muratore V."/>
            <person name="Martin-Martin N."/>
            <person name="Ercilla A."/>
            <person name="Rodriguez J.A."/>
            <person name="Carracedo A."/>
            <person name="Sutherland J.D."/>
            <person name="Barrio R."/>
        </authorList>
    </citation>
    <scope>FUNCTION</scope>
</reference>
<feature type="initiator methionine" description="Removed" evidence="1">
    <location>
        <position position="1"/>
    </location>
</feature>
<feature type="chain" id="PRO_0000234551" description="Leucine zipper protein 1">
    <location>
        <begin position="2"/>
        <end position="1068"/>
    </location>
</feature>
<feature type="region of interest" description="Disordered" evidence="4">
    <location>
        <begin position="251"/>
        <end position="292"/>
    </location>
</feature>
<feature type="region of interest" description="Disordered" evidence="4">
    <location>
        <begin position="375"/>
        <end position="402"/>
    </location>
</feature>
<feature type="region of interest" description="Disordered" evidence="4">
    <location>
        <begin position="432"/>
        <end position="558"/>
    </location>
</feature>
<feature type="region of interest" description="Disordered" evidence="4">
    <location>
        <begin position="677"/>
        <end position="700"/>
    </location>
</feature>
<feature type="region of interest" description="Disordered" evidence="4">
    <location>
        <begin position="782"/>
        <end position="829"/>
    </location>
</feature>
<feature type="region of interest" description="Required for interaction with FLNA" evidence="1">
    <location>
        <begin position="834"/>
        <end position="884"/>
    </location>
</feature>
<feature type="region of interest" description="Disordered" evidence="4">
    <location>
        <begin position="924"/>
        <end position="945"/>
    </location>
</feature>
<feature type="region of interest" description="Disordered" evidence="4">
    <location>
        <begin position="959"/>
        <end position="995"/>
    </location>
</feature>
<feature type="region of interest" description="Disordered" evidence="4">
    <location>
        <begin position="1033"/>
        <end position="1068"/>
    </location>
</feature>
<feature type="coiled-coil region" evidence="3">
    <location>
        <begin position="11"/>
        <end position="354"/>
    </location>
</feature>
<feature type="compositionally biased region" description="Basic and acidic residues" evidence="4">
    <location>
        <begin position="254"/>
        <end position="292"/>
    </location>
</feature>
<feature type="compositionally biased region" description="Polar residues" evidence="4">
    <location>
        <begin position="510"/>
        <end position="519"/>
    </location>
</feature>
<feature type="compositionally biased region" description="Low complexity" evidence="4">
    <location>
        <begin position="785"/>
        <end position="796"/>
    </location>
</feature>
<feature type="compositionally biased region" description="Polar residues" evidence="4">
    <location>
        <begin position="984"/>
        <end position="994"/>
    </location>
</feature>
<feature type="modified residue" description="N-acetylalanine" evidence="1">
    <location>
        <position position="2"/>
    </location>
</feature>
<feature type="modified residue" description="Phosphoserine" evidence="1">
    <location>
        <position position="256"/>
    </location>
</feature>
<feature type="modified residue" description="Phosphoserine" evidence="12 16">
    <location>
        <position position="261"/>
    </location>
</feature>
<feature type="modified residue" description="Phosphoserine" evidence="1">
    <location>
        <position position="395"/>
    </location>
</feature>
<feature type="modified residue" description="Phosphoserine" evidence="1">
    <location>
        <position position="513"/>
    </location>
</feature>
<feature type="modified residue" description="Phosphoserine" evidence="1">
    <location>
        <position position="571"/>
    </location>
</feature>
<feature type="modified residue" description="Phosphoserine" evidence="1">
    <location>
        <position position="575"/>
    </location>
</feature>
<feature type="modified residue" description="Phosphoserine" evidence="13 16">
    <location>
        <position position="612"/>
    </location>
</feature>
<feature type="modified residue" description="Phosphoserine" evidence="12 13 14 15 16">
    <location>
        <position position="660"/>
    </location>
</feature>
<feature type="modified residue" description="Phosphothreonine" evidence="1">
    <location>
        <position position="680"/>
    </location>
</feature>
<feature type="modified residue" description="Phosphoserine" evidence="1">
    <location>
        <position position="691"/>
    </location>
</feature>
<feature type="modified residue" description="Phosphoserine" evidence="1">
    <location>
        <position position="746"/>
    </location>
</feature>
<feature type="modified residue" description="Phosphoserine" evidence="1">
    <location>
        <position position="906"/>
    </location>
</feature>
<feature type="modified residue" description="Phosphothreonine" evidence="1">
    <location>
        <position position="952"/>
    </location>
</feature>
<feature type="modified residue" description="Phosphoserine" evidence="1">
    <location>
        <position position="988"/>
    </location>
</feature>
<feature type="sequence conflict" description="In Ref. 2; AAM00269." evidence="11" ref="2">
    <original>R</original>
    <variation>S</variation>
    <location>
        <position position="371"/>
    </location>
</feature>
<feature type="sequence conflict" description="In Ref. 1; AAA98795." evidence="11" ref="1">
    <original>S</original>
    <variation>N</variation>
    <location>
        <position position="499"/>
    </location>
</feature>
<feature type="sequence conflict" description="In Ref. 1; AAA98795." evidence="11" ref="1">
    <original>N</original>
    <variation>D</variation>
    <location>
        <position position="594"/>
    </location>
</feature>
<feature type="sequence conflict" description="In Ref. 1; AAA98795 and 4; AAH53451." evidence="11" ref="1 4">
    <original>S</original>
    <variation>SASSEV</variation>
    <location>
        <position position="906"/>
    </location>
</feature>
<feature type="sequence conflict" description="In Ref. 1; AAA98795 and 4; AAH53451." evidence="11" ref="1 4">
    <location>
        <begin position="925"/>
        <end position="930"/>
    </location>
</feature>
<feature type="sequence conflict" description="In Ref. 1; AAA98795, 2; AAM00269 and 4; AAH53451." evidence="11" ref="1 2 4">
    <original>G</original>
    <variation>R</variation>
    <location>
        <position position="935"/>
    </location>
</feature>
<feature type="sequence conflict" description="In Ref. 1; AAA98795 and 4; AAH53451." evidence="11" ref="1 4">
    <original>PC</original>
    <variation>SP</variation>
    <location>
        <begin position="950"/>
        <end position="951"/>
    </location>
</feature>
<feature type="sequence conflict" description="In Ref. 2; AAM00269." evidence="11" ref="2">
    <original>E</original>
    <variation>R</variation>
    <location>
        <position position="956"/>
    </location>
</feature>
<feature type="sequence conflict" description="In Ref. 2; AAM00269." evidence="11" ref="2">
    <original>E</original>
    <variation>R</variation>
    <location>
        <position position="958"/>
    </location>
</feature>
<feature type="sequence conflict" description="In Ref. 1; AAA98795, 2; AAM00269 and 4; AAH53451." evidence="11" ref="1 2 4">
    <original>Q</original>
    <variation>H</variation>
    <location>
        <position position="963"/>
    </location>
</feature>
<feature type="sequence conflict" description="In Ref. 1; AAA98795 and 4; AAH53451." evidence="11" ref="1 4">
    <original>R</original>
    <variation>K</variation>
    <location>
        <position position="971"/>
    </location>
</feature>
<feature type="sequence conflict" description="In Ref. 1; AAA98795 and 4; AAH53451." evidence="11" ref="1 4">
    <original>N</original>
    <variation>S</variation>
    <location>
        <position position="974"/>
    </location>
</feature>
<feature type="sequence conflict" description="In Ref. 1; AAA98795 and 4; AAH53451." evidence="11" ref="1 4">
    <original>L</original>
    <variation>R</variation>
    <location>
        <position position="981"/>
    </location>
</feature>
<feature type="sequence conflict" description="In Ref. 1; AAA98795 and 4; AAH53451." evidence="11" ref="1 4">
    <original>P</original>
    <variation>S</variation>
    <location>
        <position position="983"/>
    </location>
</feature>
<feature type="sequence conflict" description="In Ref. 1; AAA98795 and 4; AAH53451." evidence="11" ref="1 4">
    <original>C</original>
    <variation>W</variation>
    <location>
        <position position="1011"/>
    </location>
</feature>
<comment type="function">
    <text evidence="1 5 6 7 8 9">F-actin cross-linking protein (By similarity). Stabilizes actin and acts as a negative regulator of primary cilium formation (PubMed:32553112). Positively regulates the phosphorylation of both myosin II and protein phosphatase 1 regulatory subunit PPP1R12A/MYPT1 and promotes the assembly of myosin II stacks within actin stress fibers (By similarity). Inhibits the phosphorylation of myosin light chain MYL9 by DAPK3 and suppresses the constriction velocity of the contractile ring during cytokinesis (By similarity). Binds to microtubules and promotes epithelial cell apical constriction by up-regulating levels of diphosphorylated myosin light chain (MLC) through microtubule-dependent inhibition of MLC dephosphorylation by myosin phosphatase (PubMed:33346378). Involved in regulation of cell migration, nuclear size and centriole number, probably through regulation of the actin cytoskeleton (PubMed:33869174). Component of the CERF-1 and CERF-5 chromatin remodeling complexes in embryonic stem cells where it acts to stabilize the complexes (PubMed:34197713). Plays a role in embryonic brain and cardiovascular development (PubMed:18801334).</text>
</comment>
<comment type="subunit">
    <text evidence="1 9">Component of the CERF-1 ISWI chromatin remodeling complex (also called the CECR2-containing remodeling factor (CERF) complex) at least composed of CECR2 and SMARCA1 (PubMed:34197713). Component of the CERF-5 ISWI chromatin remodeling complex at least composed of CECR2 and SMARCA5/SNF2H (PubMed:34197713). LUZP1 is detected as part of the CERF-1 and CERF-5 complexes in embryonic stem (ES) cells where it is involved in complex stabilization but is not detected in the complexes in the testis (PubMed:34197713). Interacts (via C-terminus) with LIMA1/EPLIN; both proteins restrict ciliation and may work together to regulate this process (By similarity). Interacts with myosin light chain MYL9; the interaction results in inhibition of phosphorylation of MYL9 by DAPK3 (By similarity). Interacts with DAPK3; the interaction is likely to occur throughout the cell cycle and reduces the LUZP1-mediated suppression of MYL9 phosphorylation (By similarity). Interacts with the chromosomal passenger complex (CPC); CPC kinase activity is required for localization of LUZP1 to the centromere (By similarity).</text>
</comment>
<comment type="subcellular location">
    <subcellularLocation>
        <location evidence="1">Cytoplasm</location>
        <location evidence="1">Cytoskeleton</location>
        <location evidence="1">Microtubule organizing center</location>
        <location evidence="1">Centrosome</location>
    </subcellularLocation>
    <subcellularLocation>
        <location evidence="1">Cytoplasm</location>
        <location evidence="1">Cytoskeleton</location>
        <location evidence="1">Cilium basal body</location>
    </subcellularLocation>
    <subcellularLocation>
        <location evidence="1">Midbody</location>
    </subcellularLocation>
    <subcellularLocation>
        <location evidence="1">Chromosome</location>
        <location evidence="1">Centromere</location>
    </subcellularLocation>
    <subcellularLocation>
        <location evidence="1">Cytoplasm</location>
        <location evidence="1">Cytoskeleton</location>
        <location evidence="1">Spindle</location>
    </subcellularLocation>
    <subcellularLocation>
        <location evidence="1">Cytoplasm</location>
        <location evidence="1">Cytoskeleton</location>
        <location evidence="1">Stress fiber</location>
    </subcellularLocation>
    <subcellularLocation>
        <location evidence="2">Nucleus</location>
    </subcellularLocation>
    <subcellularLocation>
        <location evidence="2">Cell projection</location>
        <location evidence="2">Dendrite</location>
    </subcellularLocation>
    <subcellularLocation>
        <location evidence="2">Perikaryon</location>
    </subcellularLocation>
    <subcellularLocation>
        <location evidence="7">Cell junction</location>
        <location evidence="7">Tight junction</location>
    </subcellularLocation>
    <text evidence="1">Localizes to the proximal end of basal bodies (By similarity). During mitosis, localizes at the inner centromere in metaphase, at the central spindle in anaphase, and at the midbody in telophase (By similarity). Central spindle localization requires KIF20A while centromere localization requires the kinase activity of the chromosomal passenger complex (By similarity).</text>
</comment>
<comment type="tissue specificity">
    <text evidence="10">Predominantly expressed in the brain (at protein level).</text>
</comment>
<comment type="disruption phenotype">
    <text evidence="5">Defective neural tube closure with ectopic Shh expression and excessive cell death in the hindbrain region, complex cardiovascular defects and perinatal death.</text>
</comment>
<keyword id="KW-0007">Acetylation</keyword>
<keyword id="KW-0009">Actin-binding</keyword>
<keyword id="KW-0965">Cell junction</keyword>
<keyword id="KW-0966">Cell projection</keyword>
<keyword id="KW-0137">Centromere</keyword>
<keyword id="KW-0158">Chromosome</keyword>
<keyword id="KW-0175">Coiled coil</keyword>
<keyword id="KW-0963">Cytoplasm</keyword>
<keyword id="KW-0206">Cytoskeleton</keyword>
<keyword id="KW-0493">Microtubule</keyword>
<keyword id="KW-0539">Nucleus</keyword>
<keyword id="KW-0597">Phosphoprotein</keyword>
<keyword id="KW-1185">Reference proteome</keyword>
<keyword id="KW-0796">Tight junction</keyword>
<protein>
    <recommendedName>
        <fullName>Leucine zipper protein 1</fullName>
    </recommendedName>
    <alternativeName>
        <fullName evidence="1">Filamin mechanobinding actin cross-linking protein</fullName>
        <shortName evidence="1">Fimbacin</shortName>
    </alternativeName>
    <alternativeName>
        <fullName>Leucine zipper motif-containing protein</fullName>
    </alternativeName>
</protein>
<gene>
    <name type="primary">Luzp1</name>
    <name type="synonym">Luzp</name>
</gene>
<accession>Q8R4U7</accession>
<accession>A3KG96</accession>
<accession>Q3UV18</accession>
<accession>Q7TS71</accession>
<accession>Q8BQW1</accession>
<accession>Q99NG3</accession>
<accession>Q9CSL6</accession>
<proteinExistence type="evidence at protein level"/>
<organism>
    <name type="scientific">Mus musculus</name>
    <name type="common">Mouse</name>
    <dbReference type="NCBI Taxonomy" id="10090"/>
    <lineage>
        <taxon>Eukaryota</taxon>
        <taxon>Metazoa</taxon>
        <taxon>Chordata</taxon>
        <taxon>Craniata</taxon>
        <taxon>Vertebrata</taxon>
        <taxon>Euteleostomi</taxon>
        <taxon>Mammalia</taxon>
        <taxon>Eutheria</taxon>
        <taxon>Euarchontoglires</taxon>
        <taxon>Glires</taxon>
        <taxon>Rodentia</taxon>
        <taxon>Myomorpha</taxon>
        <taxon>Muroidea</taxon>
        <taxon>Muridae</taxon>
        <taxon>Murinae</taxon>
        <taxon>Mus</taxon>
        <taxon>Mus</taxon>
    </lineage>
</organism>
<dbReference type="EMBL" id="L49344">
    <property type="protein sequence ID" value="AAA98795.1"/>
    <property type="molecule type" value="mRNA"/>
</dbReference>
<dbReference type="EMBL" id="AF362727">
    <property type="protein sequence ID" value="AAM00269.1"/>
    <property type="molecule type" value="Genomic_DNA"/>
</dbReference>
<dbReference type="EMBL" id="AL671173">
    <property type="status" value="NOT_ANNOTATED_CDS"/>
    <property type="molecule type" value="Genomic_DNA"/>
</dbReference>
<dbReference type="EMBL" id="AK012514">
    <property type="protein sequence ID" value="BAB28289.1"/>
    <property type="molecule type" value="mRNA"/>
</dbReference>
<dbReference type="EMBL" id="AK046323">
    <property type="protein sequence ID" value="BAC32681.2"/>
    <property type="status" value="ALT_SEQ"/>
    <property type="molecule type" value="mRNA"/>
</dbReference>
<dbReference type="EMBL" id="AK137669">
    <property type="protein sequence ID" value="BAE23455.1"/>
    <property type="molecule type" value="mRNA"/>
</dbReference>
<dbReference type="EMBL" id="BC053451">
    <property type="protein sequence ID" value="AAH53451.1"/>
    <property type="molecule type" value="mRNA"/>
</dbReference>
<dbReference type="CCDS" id="CCDS38923.1"/>
<dbReference type="RefSeq" id="NP_077772.2">
    <property type="nucleotide sequence ID" value="NM_024452.2"/>
</dbReference>
<dbReference type="RefSeq" id="XP_006538984.1">
    <property type="nucleotide sequence ID" value="XM_006538921.3"/>
</dbReference>
<dbReference type="RefSeq" id="XP_030109447.1">
    <property type="nucleotide sequence ID" value="XM_030253587.2"/>
</dbReference>
<dbReference type="SMR" id="Q8R4U7"/>
<dbReference type="BioGRID" id="234675">
    <property type="interactions" value="12"/>
</dbReference>
<dbReference type="FunCoup" id="Q8R4U7">
    <property type="interactions" value="1295"/>
</dbReference>
<dbReference type="IntAct" id="Q8R4U7">
    <property type="interactions" value="6"/>
</dbReference>
<dbReference type="MINT" id="Q8R4U7"/>
<dbReference type="STRING" id="10090.ENSMUSP00000130758"/>
<dbReference type="GlyGen" id="Q8R4U7">
    <property type="glycosylation" value="3 sites, 1 N-linked glycan (1 site), 1 O-linked glycan (2 sites)"/>
</dbReference>
<dbReference type="iPTMnet" id="Q8R4U7"/>
<dbReference type="PhosphoSitePlus" id="Q8R4U7"/>
<dbReference type="jPOST" id="Q8R4U7"/>
<dbReference type="PaxDb" id="10090-ENSMUSP00000130758"/>
<dbReference type="PeptideAtlas" id="Q8R4U7"/>
<dbReference type="ProteomicsDB" id="292052"/>
<dbReference type="Pumba" id="Q8R4U7"/>
<dbReference type="Antibodypedia" id="30121">
    <property type="antibodies" value="104 antibodies from 24 providers"/>
</dbReference>
<dbReference type="Ensembl" id="ENSMUST00000001116.5">
    <property type="protein sequence ID" value="ENSMUSP00000001116.5"/>
    <property type="gene ID" value="ENSMUSG00000001089.15"/>
</dbReference>
<dbReference type="Ensembl" id="ENSMUST00000063021.7">
    <property type="protein sequence ID" value="ENSMUSP00000060619.7"/>
    <property type="gene ID" value="ENSMUSG00000001089.15"/>
</dbReference>
<dbReference type="Ensembl" id="ENSMUST00000105849.9">
    <property type="protein sequence ID" value="ENSMUSP00000101475.3"/>
    <property type="gene ID" value="ENSMUSG00000001089.15"/>
</dbReference>
<dbReference type="Ensembl" id="ENSMUST00000170102.8">
    <property type="protein sequence ID" value="ENSMUSP00000130758.2"/>
    <property type="gene ID" value="ENSMUSG00000001089.15"/>
</dbReference>
<dbReference type="GeneID" id="269593"/>
<dbReference type="KEGG" id="mmu:269593"/>
<dbReference type="UCSC" id="uc008vie.1">
    <property type="organism name" value="mouse"/>
</dbReference>
<dbReference type="AGR" id="MGI:107629"/>
<dbReference type="CTD" id="7798"/>
<dbReference type="MGI" id="MGI:107629">
    <property type="gene designation" value="Luzp1"/>
</dbReference>
<dbReference type="VEuPathDB" id="HostDB:ENSMUSG00000001089"/>
<dbReference type="eggNOG" id="ENOG502QV81">
    <property type="taxonomic scope" value="Eukaryota"/>
</dbReference>
<dbReference type="GeneTree" id="ENSGT00950000182852"/>
<dbReference type="HOGENOM" id="CLU_010207_1_0_1"/>
<dbReference type="InParanoid" id="Q8R4U7"/>
<dbReference type="OMA" id="NVKKIMG"/>
<dbReference type="OrthoDB" id="9946011at2759"/>
<dbReference type="PhylomeDB" id="Q8R4U7"/>
<dbReference type="TreeFam" id="TF331399"/>
<dbReference type="BioGRID-ORCS" id="269593">
    <property type="hits" value="4 hits in 77 CRISPR screens"/>
</dbReference>
<dbReference type="ChiTaRS" id="Luzp1">
    <property type="organism name" value="mouse"/>
</dbReference>
<dbReference type="PRO" id="PR:Q8R4U7"/>
<dbReference type="Proteomes" id="UP000000589">
    <property type="component" value="Chromosome 4"/>
</dbReference>
<dbReference type="RNAct" id="Q8R4U7">
    <property type="molecule type" value="protein"/>
</dbReference>
<dbReference type="Bgee" id="ENSMUSG00000001089">
    <property type="expression patterns" value="Expressed in placenta labyrinth and 252 other cell types or tissues"/>
</dbReference>
<dbReference type="ExpressionAtlas" id="Q8R4U7">
    <property type="expression patterns" value="baseline and differential"/>
</dbReference>
<dbReference type="GO" id="GO:0005884">
    <property type="term" value="C:actin filament"/>
    <property type="evidence" value="ECO:0000250"/>
    <property type="project" value="UniProtKB"/>
</dbReference>
<dbReference type="GO" id="GO:0005923">
    <property type="term" value="C:bicellular tight junction"/>
    <property type="evidence" value="ECO:0007669"/>
    <property type="project" value="UniProtKB-SubCell"/>
</dbReference>
<dbReference type="GO" id="GO:0005813">
    <property type="term" value="C:centrosome"/>
    <property type="evidence" value="ECO:0000250"/>
    <property type="project" value="UniProtKB"/>
</dbReference>
<dbReference type="GO" id="GO:0090537">
    <property type="term" value="C:CERF complex"/>
    <property type="evidence" value="ECO:0000314"/>
    <property type="project" value="UniProtKB"/>
</dbReference>
<dbReference type="GO" id="GO:0000775">
    <property type="term" value="C:chromosome, centromeric region"/>
    <property type="evidence" value="ECO:0000250"/>
    <property type="project" value="UniProtKB"/>
</dbReference>
<dbReference type="GO" id="GO:0036064">
    <property type="term" value="C:ciliary basal body"/>
    <property type="evidence" value="ECO:0000250"/>
    <property type="project" value="UniProtKB"/>
</dbReference>
<dbReference type="GO" id="GO:0005737">
    <property type="term" value="C:cytoplasm"/>
    <property type="evidence" value="ECO:0007669"/>
    <property type="project" value="UniProtKB-KW"/>
</dbReference>
<dbReference type="GO" id="GO:0030425">
    <property type="term" value="C:dendrite"/>
    <property type="evidence" value="ECO:0007669"/>
    <property type="project" value="UniProtKB-SubCell"/>
</dbReference>
<dbReference type="GO" id="GO:0005874">
    <property type="term" value="C:microtubule"/>
    <property type="evidence" value="ECO:0007669"/>
    <property type="project" value="UniProtKB-KW"/>
</dbReference>
<dbReference type="GO" id="GO:0030496">
    <property type="term" value="C:midbody"/>
    <property type="evidence" value="ECO:0000250"/>
    <property type="project" value="UniProtKB"/>
</dbReference>
<dbReference type="GO" id="GO:0005634">
    <property type="term" value="C:nucleus"/>
    <property type="evidence" value="ECO:0000314"/>
    <property type="project" value="MGI"/>
</dbReference>
<dbReference type="GO" id="GO:0043204">
    <property type="term" value="C:perikaryon"/>
    <property type="evidence" value="ECO:0007669"/>
    <property type="project" value="UniProtKB-SubCell"/>
</dbReference>
<dbReference type="GO" id="GO:0051233">
    <property type="term" value="C:spindle midzone"/>
    <property type="evidence" value="ECO:0000250"/>
    <property type="project" value="UniProtKB"/>
</dbReference>
<dbReference type="GO" id="GO:0001725">
    <property type="term" value="C:stress fiber"/>
    <property type="evidence" value="ECO:0000250"/>
    <property type="project" value="UniProtKB"/>
</dbReference>
<dbReference type="GO" id="GO:0070160">
    <property type="term" value="C:tight junction"/>
    <property type="evidence" value="ECO:0000314"/>
    <property type="project" value="UniProtKB"/>
</dbReference>
<dbReference type="GO" id="GO:0051015">
    <property type="term" value="F:actin filament binding"/>
    <property type="evidence" value="ECO:0000250"/>
    <property type="project" value="UniProtKB"/>
</dbReference>
<dbReference type="GO" id="GO:0008017">
    <property type="term" value="F:microtubule binding"/>
    <property type="evidence" value="ECO:0000314"/>
    <property type="project" value="UniProtKB"/>
</dbReference>
<dbReference type="GO" id="GO:0003383">
    <property type="term" value="P:apical constriction"/>
    <property type="evidence" value="ECO:0000315"/>
    <property type="project" value="UniProtKB"/>
</dbReference>
<dbReference type="GO" id="GO:0060840">
    <property type="term" value="P:artery development"/>
    <property type="evidence" value="ECO:0000315"/>
    <property type="project" value="MGI"/>
</dbReference>
<dbReference type="GO" id="GO:0036213">
    <property type="term" value="P:contractile ring contraction"/>
    <property type="evidence" value="ECO:0000250"/>
    <property type="project" value="UniProtKB"/>
</dbReference>
<dbReference type="GO" id="GO:1902018">
    <property type="term" value="P:negative regulation of cilium assembly"/>
    <property type="evidence" value="ECO:0000315"/>
    <property type="project" value="UniProtKB"/>
</dbReference>
<dbReference type="GO" id="GO:0021503">
    <property type="term" value="P:neural fold bending"/>
    <property type="evidence" value="ECO:0000315"/>
    <property type="project" value="MGI"/>
</dbReference>
<dbReference type="GO" id="GO:0061635">
    <property type="term" value="P:regulation of protein complex stability"/>
    <property type="evidence" value="ECO:0000315"/>
    <property type="project" value="UniProtKB"/>
</dbReference>
<dbReference type="GO" id="GO:0043149">
    <property type="term" value="P:stress fiber assembly"/>
    <property type="evidence" value="ECO:0000250"/>
    <property type="project" value="UniProtKB"/>
</dbReference>
<dbReference type="GO" id="GO:0003281">
    <property type="term" value="P:ventricular septum development"/>
    <property type="evidence" value="ECO:0000315"/>
    <property type="project" value="MGI"/>
</dbReference>
<dbReference type="InterPro" id="IPR050719">
    <property type="entry name" value="Cortactin-Actin_Reg"/>
</dbReference>
<dbReference type="PANTHER" id="PTHR23166">
    <property type="entry name" value="FILAMIN/GPBP-INTERACTING PROTEIN"/>
    <property type="match status" value="1"/>
</dbReference>
<dbReference type="PANTHER" id="PTHR23166:SF7">
    <property type="entry name" value="LEUCINE ZIPPER PROTEIN 1"/>
    <property type="match status" value="1"/>
</dbReference>
<sequence>MAELTNYKDAASNRHLRFKLQSLSRRLDELEEATKNLQRAEDELLDLQDKVIQAEGSDSSTLAEIEVLRQRVLKIEGKDEEIKRAEDLCHTMKEKLEEEENLTRELKSEIERLQKRMVDLEKLEEALSRSKNECSQLCLSLNEERNLTKKISSELEMLRVKVKELESSEDRLDKTEQSLVSELEKLKSLTLSFVNERKYLNEKEKENEKIIKELTQKLEQNKKMNRDHMRNASTFLERNDLRIEDGISSTLSSKESKRKGSLDYLKQVENETRDKSENEKNRNQEDNKVKDLNQEIEKLKTQIKHFESLEEELKKMRAKNNDLQDNYLTELNRNRSLASQLEEIKLQVRKQKELGNGDIEGEDAFLLGRGRHERTKLKGHGSEASVSKHTSRELSPQHKRERLRNREFALSNEHYSLSSKQASSPVFTNKRAAKASNMGMGTDSGTQETKRTEDRFAPGSSHSEGKRGREQPSVLSRYPPAAQEHTKVWKGAPKPGTESGLKGKVEKTTRTFSDSTHVSVPNDIVGKGDKTSDLSSEAHCGKRGQVPGHASQGTQAVESSCSKAIGALSSSQKASSEGLSKGKKTANGLAADANFSNSKAPILSKYPYSSRSQENILQGFSLPNKEGVDQPVAVVMEDSSQHEALRCRVIKSSGREKPDSDDDLDIESFVTAKLVNTTITPEPEPKPQPNSREKVKSRGGTRTALFENDKNAAIENDSVKPTRPSSNAIEFPDANCAGVKNQRPFSPREALRSRAIIKPVIIDKDVKKIMGGSGTEVVLEKQKSTSKSVTSKVTSSITIYPSDSSGPRAVPSEAPRERHTSTSNIQVGPPELTAISNHVSSPLELSIHKHDITLQLTEAERVGDGSPKNRAEMVVSRSSILIKPSESVEKNSHVPPAETIRWKSHSASSDSRHITVRNAWKSKRDLKCSEDPPTGIGRNMEATNAYTQRPCTDFLELEQPRSQPSEQGARRVGNSGDAPELSPRRTQSSLTASEVLTRRDRMGGAITAASCNHSSSMEEGEDSTFVTSRRIHNPLEHSELPGKQGLPEPEPVWTEERLHPAKPYAEED</sequence>
<name>LUZP1_MOUSE</name>